<dbReference type="EMBL" id="CP000931">
    <property type="protein sequence ID" value="ABZ78637.1"/>
    <property type="molecule type" value="Genomic_DNA"/>
</dbReference>
<dbReference type="RefSeq" id="WP_012279154.1">
    <property type="nucleotide sequence ID" value="NC_010334.1"/>
</dbReference>
<dbReference type="SMR" id="B0TL92"/>
<dbReference type="STRING" id="458817.Shal_4097"/>
<dbReference type="KEGG" id="shl:Shal_4097"/>
<dbReference type="eggNOG" id="COG1058">
    <property type="taxonomic scope" value="Bacteria"/>
</dbReference>
<dbReference type="eggNOG" id="COG1546">
    <property type="taxonomic scope" value="Bacteria"/>
</dbReference>
<dbReference type="HOGENOM" id="CLU_030805_9_1_6"/>
<dbReference type="OrthoDB" id="9801454at2"/>
<dbReference type="Proteomes" id="UP000001317">
    <property type="component" value="Chromosome"/>
</dbReference>
<dbReference type="CDD" id="cd00885">
    <property type="entry name" value="cinA"/>
    <property type="match status" value="1"/>
</dbReference>
<dbReference type="Gene3D" id="3.90.950.20">
    <property type="entry name" value="CinA-like"/>
    <property type="match status" value="1"/>
</dbReference>
<dbReference type="Gene3D" id="3.40.980.10">
    <property type="entry name" value="MoaB/Mog-like domain"/>
    <property type="match status" value="1"/>
</dbReference>
<dbReference type="HAMAP" id="MF_00226_B">
    <property type="entry name" value="CinA_B"/>
    <property type="match status" value="1"/>
</dbReference>
<dbReference type="InterPro" id="IPR050101">
    <property type="entry name" value="CinA"/>
</dbReference>
<dbReference type="InterPro" id="IPR036653">
    <property type="entry name" value="CinA-like_C"/>
</dbReference>
<dbReference type="InterPro" id="IPR008136">
    <property type="entry name" value="CinA_C"/>
</dbReference>
<dbReference type="InterPro" id="IPR008135">
    <property type="entry name" value="Competence-induced_CinA"/>
</dbReference>
<dbReference type="InterPro" id="IPR036425">
    <property type="entry name" value="MoaB/Mog-like_dom_sf"/>
</dbReference>
<dbReference type="InterPro" id="IPR001453">
    <property type="entry name" value="MoaB/Mog_dom"/>
</dbReference>
<dbReference type="NCBIfam" id="TIGR00200">
    <property type="entry name" value="cinA_nterm"/>
    <property type="match status" value="1"/>
</dbReference>
<dbReference type="NCBIfam" id="TIGR00177">
    <property type="entry name" value="molyb_syn"/>
    <property type="match status" value="1"/>
</dbReference>
<dbReference type="NCBIfam" id="TIGR00199">
    <property type="entry name" value="PncC_domain"/>
    <property type="match status" value="1"/>
</dbReference>
<dbReference type="PANTHER" id="PTHR13939">
    <property type="entry name" value="NICOTINAMIDE-NUCLEOTIDE AMIDOHYDROLASE PNCC"/>
    <property type="match status" value="1"/>
</dbReference>
<dbReference type="PANTHER" id="PTHR13939:SF0">
    <property type="entry name" value="NMN AMIDOHYDROLASE-LIKE PROTEIN YFAY"/>
    <property type="match status" value="1"/>
</dbReference>
<dbReference type="Pfam" id="PF02464">
    <property type="entry name" value="CinA"/>
    <property type="match status" value="1"/>
</dbReference>
<dbReference type="Pfam" id="PF00994">
    <property type="entry name" value="MoCF_biosynth"/>
    <property type="match status" value="1"/>
</dbReference>
<dbReference type="PIRSF" id="PIRSF006728">
    <property type="entry name" value="CinA"/>
    <property type="match status" value="1"/>
</dbReference>
<dbReference type="SMART" id="SM00852">
    <property type="entry name" value="MoCF_biosynth"/>
    <property type="match status" value="1"/>
</dbReference>
<dbReference type="SUPFAM" id="SSF142433">
    <property type="entry name" value="CinA-like"/>
    <property type="match status" value="1"/>
</dbReference>
<dbReference type="SUPFAM" id="SSF53218">
    <property type="entry name" value="Molybdenum cofactor biosynthesis proteins"/>
    <property type="match status" value="1"/>
</dbReference>
<proteinExistence type="inferred from homology"/>
<feature type="chain" id="PRO_1000078182" description="CinA-like protein">
    <location>
        <begin position="1"/>
        <end position="424"/>
    </location>
</feature>
<comment type="similarity">
    <text evidence="1">Belongs to the CinA family.</text>
</comment>
<reference key="1">
    <citation type="submission" date="2008-01" db="EMBL/GenBank/DDBJ databases">
        <title>Complete sequence of Shewanella halifaxensis HAW-EB4.</title>
        <authorList>
            <consortium name="US DOE Joint Genome Institute"/>
            <person name="Copeland A."/>
            <person name="Lucas S."/>
            <person name="Lapidus A."/>
            <person name="Glavina del Rio T."/>
            <person name="Dalin E."/>
            <person name="Tice H."/>
            <person name="Bruce D."/>
            <person name="Goodwin L."/>
            <person name="Pitluck S."/>
            <person name="Sims D."/>
            <person name="Brettin T."/>
            <person name="Detter J.C."/>
            <person name="Han C."/>
            <person name="Kuske C.R."/>
            <person name="Schmutz J."/>
            <person name="Larimer F."/>
            <person name="Land M."/>
            <person name="Hauser L."/>
            <person name="Kyrpides N."/>
            <person name="Kim E."/>
            <person name="Zhao J.-S."/>
            <person name="Richardson P."/>
        </authorList>
    </citation>
    <scope>NUCLEOTIDE SEQUENCE [LARGE SCALE GENOMIC DNA]</scope>
    <source>
        <strain>HAW-EB4</strain>
    </source>
</reference>
<gene>
    <name type="ordered locus">Shal_4097</name>
</gene>
<protein>
    <recommendedName>
        <fullName evidence="1">CinA-like protein</fullName>
    </recommendedName>
</protein>
<evidence type="ECO:0000255" key="1">
    <source>
        <dbReference type="HAMAP-Rule" id="MF_00226"/>
    </source>
</evidence>
<accession>B0TL92</accession>
<name>CINAL_SHEHH</name>
<sequence>MKLEMICTGEEVLAGQIVDTNAAWFANTMMDQGIECQRRVTVGDRLEDLISVFRERSLEADIILVNGGLGPTSDDLSTEAMALAKGETLVENSIWRQRLEDWFARSGRVMAESNLKQALLPESAIMIDNPVGTACGFAVKFNRAWLFFTPGVPFEFKQMVHEQFIPFVKQRFDVSGDVALRKYLTLGQGESSLADTLDKIELPEGMTIGYRSSMPHIEIKLFARGIGAIDQLDTIETQIRLLLGNAIVADNKMSLAEEIHALLVDSDLSLSVAESCTGGMIVSQLISFSGSSSYLHQGLVTYCNESKVKVLGVKPETLDVHGAVSIATVEEMAKGARAILDSDFGLATSGIAGPTGGTDNKPVGTVAIALATKEGVYSQMIKLPRRSRDLVRSLSTAVAFDMLRRELLGQAVIVDYGSIGRFEK</sequence>
<organism>
    <name type="scientific">Shewanella halifaxensis (strain HAW-EB4)</name>
    <dbReference type="NCBI Taxonomy" id="458817"/>
    <lineage>
        <taxon>Bacteria</taxon>
        <taxon>Pseudomonadati</taxon>
        <taxon>Pseudomonadota</taxon>
        <taxon>Gammaproteobacteria</taxon>
        <taxon>Alteromonadales</taxon>
        <taxon>Shewanellaceae</taxon>
        <taxon>Shewanella</taxon>
    </lineage>
</organism>